<evidence type="ECO:0000250" key="1">
    <source>
        <dbReference type="UniProtKB" id="O95436"/>
    </source>
</evidence>
<evidence type="ECO:0000250" key="2">
    <source>
        <dbReference type="UniProtKB" id="Q06496"/>
    </source>
</evidence>
<evidence type="ECO:0000250" key="3">
    <source>
        <dbReference type="UniProtKB" id="Q9DBP0"/>
    </source>
</evidence>
<evidence type="ECO:0000255" key="4"/>
<evidence type="ECO:0000256" key="5">
    <source>
        <dbReference type="SAM" id="MobiDB-lite"/>
    </source>
</evidence>
<evidence type="ECO:0000305" key="6"/>
<gene>
    <name type="primary">SLC34A2</name>
</gene>
<organism>
    <name type="scientific">Pongo abelii</name>
    <name type="common">Sumatran orangutan</name>
    <name type="synonym">Pongo pygmaeus abelii</name>
    <dbReference type="NCBI Taxonomy" id="9601"/>
    <lineage>
        <taxon>Eukaryota</taxon>
        <taxon>Metazoa</taxon>
        <taxon>Chordata</taxon>
        <taxon>Craniata</taxon>
        <taxon>Vertebrata</taxon>
        <taxon>Euteleostomi</taxon>
        <taxon>Mammalia</taxon>
        <taxon>Eutheria</taxon>
        <taxon>Euarchontoglires</taxon>
        <taxon>Primates</taxon>
        <taxon>Haplorrhini</taxon>
        <taxon>Catarrhini</taxon>
        <taxon>Hominidae</taxon>
        <taxon>Pongo</taxon>
    </lineage>
</organism>
<accession>Q5REV9</accession>
<feature type="chain" id="PRO_0000068615" description="Sodium-dependent phosphate transport protein 2B">
    <location>
        <begin position="1"/>
        <end position="689"/>
    </location>
</feature>
<feature type="topological domain" description="Cytoplasmic" evidence="4">
    <location>
        <begin position="1"/>
        <end position="100"/>
    </location>
</feature>
<feature type="transmembrane region" description="Helical; Name=M1" evidence="4">
    <location>
        <begin position="101"/>
        <end position="121"/>
    </location>
</feature>
<feature type="topological domain" description="Extracellular" evidence="4">
    <location>
        <begin position="122"/>
        <end position="135"/>
    </location>
</feature>
<feature type="transmembrane region" description="Helical; Name=M2" evidence="4">
    <location>
        <begin position="136"/>
        <end position="156"/>
    </location>
</feature>
<feature type="topological domain" description="Cytoplasmic" evidence="4">
    <location>
        <begin position="157"/>
        <end position="212"/>
    </location>
</feature>
<feature type="transmembrane region" description="Helical; Name=M3" evidence="4">
    <location>
        <begin position="213"/>
        <end position="233"/>
    </location>
</feature>
<feature type="topological domain" description="Extracellular" evidence="4">
    <location>
        <begin position="234"/>
        <end position="362"/>
    </location>
</feature>
<feature type="transmembrane region" description="Helical; Name=M4" evidence="4">
    <location>
        <begin position="363"/>
        <end position="383"/>
    </location>
</feature>
<feature type="topological domain" description="Cytoplasmic" evidence="4">
    <location>
        <begin position="384"/>
        <end position="407"/>
    </location>
</feature>
<feature type="transmembrane region" description="Helical; Name=M5" evidence="4">
    <location>
        <begin position="408"/>
        <end position="428"/>
    </location>
</feature>
<feature type="topological domain" description="Extracellular" evidence="4">
    <location>
        <begin position="429"/>
        <end position="485"/>
    </location>
</feature>
<feature type="transmembrane region" description="Helical; Name=M6" evidence="4">
    <location>
        <begin position="486"/>
        <end position="506"/>
    </location>
</feature>
<feature type="topological domain" description="Cytoplasmic" evidence="4">
    <location>
        <begin position="507"/>
        <end position="525"/>
    </location>
</feature>
<feature type="transmembrane region" description="Helical; Name=M7" evidence="4">
    <location>
        <begin position="526"/>
        <end position="546"/>
    </location>
</feature>
<feature type="topological domain" description="Extracellular" evidence="4">
    <location>
        <begin position="547"/>
        <end position="552"/>
    </location>
</feature>
<feature type="transmembrane region" description="Helical; Name=M8" evidence="4">
    <location>
        <begin position="553"/>
        <end position="573"/>
    </location>
</feature>
<feature type="topological domain" description="Cytoplasmic" evidence="4">
    <location>
        <begin position="574"/>
        <end position="687"/>
    </location>
</feature>
<feature type="region of interest" description="Disordered" evidence="5">
    <location>
        <begin position="1"/>
        <end position="41"/>
    </location>
</feature>
<feature type="glycosylation site" description="N-linked (GlcNAc...) asparagine" evidence="4">
    <location>
        <position position="294"/>
    </location>
</feature>
<feature type="glycosylation site" description="N-linked (GlcNAc...) asparagine" evidence="4">
    <location>
        <position position="307"/>
    </location>
</feature>
<feature type="glycosylation site" description="N-linked (GlcNAc...) asparagine" evidence="4">
    <location>
        <position position="320"/>
    </location>
</feature>
<feature type="disulfide bond" evidence="2">
    <location>
        <begin position="302"/>
        <end position="349"/>
    </location>
</feature>
<name>NPT2B_PONAB</name>
<comment type="function">
    <text evidence="1">Involved in actively transporting phosphate into cells via Na(+) cotransport.</text>
</comment>
<comment type="catalytic activity">
    <reaction evidence="1">
        <text>3 Na(+)(out) + phosphate(out) = 3 Na(+)(in) + phosphate(in)</text>
        <dbReference type="Rhea" id="RHEA:71255"/>
        <dbReference type="ChEBI" id="CHEBI:29101"/>
        <dbReference type="ChEBI" id="CHEBI:43474"/>
    </reaction>
    <physiologicalReaction direction="left-to-right" evidence="1">
        <dbReference type="Rhea" id="RHEA:71256"/>
    </physiologicalReaction>
</comment>
<comment type="subcellular location">
    <subcellularLocation>
        <location evidence="3">Apical cell membrane</location>
        <topology evidence="4">Multi-pass membrane protein</topology>
    </subcellularLocation>
    <text evidence="3">Localized at the brush border membranes of enterocytes.</text>
</comment>
<comment type="similarity">
    <text evidence="6">Belongs to the SLC34A transporter family.</text>
</comment>
<dbReference type="EMBL" id="CR857407">
    <property type="protein sequence ID" value="CAH89698.1"/>
    <property type="molecule type" value="mRNA"/>
</dbReference>
<dbReference type="RefSeq" id="NP_001124770.1">
    <property type="nucleotide sequence ID" value="NM_001131298.1"/>
</dbReference>
<dbReference type="FunCoup" id="Q5REV9">
    <property type="interactions" value="64"/>
</dbReference>
<dbReference type="STRING" id="9601.ENSPPYP00000016368"/>
<dbReference type="GlyCosmos" id="Q5REV9">
    <property type="glycosylation" value="3 sites, No reported glycans"/>
</dbReference>
<dbReference type="GeneID" id="100171622"/>
<dbReference type="KEGG" id="pon:100171622"/>
<dbReference type="CTD" id="10568"/>
<dbReference type="eggNOG" id="ENOG502QQ3I">
    <property type="taxonomic scope" value="Eukaryota"/>
</dbReference>
<dbReference type="InParanoid" id="Q5REV9"/>
<dbReference type="OrthoDB" id="76259at2759"/>
<dbReference type="Proteomes" id="UP000001595">
    <property type="component" value="Unplaced"/>
</dbReference>
<dbReference type="GO" id="GO:0016324">
    <property type="term" value="C:apical plasma membrane"/>
    <property type="evidence" value="ECO:0007669"/>
    <property type="project" value="UniProtKB-SubCell"/>
</dbReference>
<dbReference type="GO" id="GO:0005903">
    <property type="term" value="C:brush border"/>
    <property type="evidence" value="ECO:0007669"/>
    <property type="project" value="TreeGrafter"/>
</dbReference>
<dbReference type="GO" id="GO:0016020">
    <property type="term" value="C:membrane"/>
    <property type="evidence" value="ECO:0000250"/>
    <property type="project" value="UniProtKB"/>
</dbReference>
<dbReference type="GO" id="GO:0031982">
    <property type="term" value="C:vesicle"/>
    <property type="evidence" value="ECO:0007669"/>
    <property type="project" value="TreeGrafter"/>
</dbReference>
<dbReference type="GO" id="GO:0042301">
    <property type="term" value="F:phosphate ion binding"/>
    <property type="evidence" value="ECO:0000250"/>
    <property type="project" value="UniProtKB"/>
</dbReference>
<dbReference type="GO" id="GO:0031402">
    <property type="term" value="F:sodium ion binding"/>
    <property type="evidence" value="ECO:0000250"/>
    <property type="project" value="UniProtKB"/>
</dbReference>
<dbReference type="GO" id="GO:0005436">
    <property type="term" value="F:sodium:phosphate symporter activity"/>
    <property type="evidence" value="ECO:0000250"/>
    <property type="project" value="UniProtKB"/>
</dbReference>
<dbReference type="GO" id="GO:0030643">
    <property type="term" value="P:intracellular phosphate ion homeostasis"/>
    <property type="evidence" value="ECO:0007669"/>
    <property type="project" value="TreeGrafter"/>
</dbReference>
<dbReference type="GO" id="GO:0006817">
    <property type="term" value="P:phosphate ion transport"/>
    <property type="evidence" value="ECO:0000250"/>
    <property type="project" value="UniProtKB"/>
</dbReference>
<dbReference type="GO" id="GO:0044341">
    <property type="term" value="P:sodium-dependent phosphate transport"/>
    <property type="evidence" value="ECO:0007669"/>
    <property type="project" value="InterPro"/>
</dbReference>
<dbReference type="InterPro" id="IPR003841">
    <property type="entry name" value="Na/Pi_transpt"/>
</dbReference>
<dbReference type="NCBIfam" id="TIGR01013">
    <property type="entry name" value="2a58"/>
    <property type="match status" value="1"/>
</dbReference>
<dbReference type="NCBIfam" id="NF037997">
    <property type="entry name" value="Na_Pi_symport"/>
    <property type="match status" value="1"/>
</dbReference>
<dbReference type="PANTHER" id="PTHR10010:SF23">
    <property type="entry name" value="SODIUM-DEPENDENT PHOSPHATE TRANSPORT PROTEIN 2B"/>
    <property type="match status" value="1"/>
</dbReference>
<dbReference type="PANTHER" id="PTHR10010">
    <property type="entry name" value="SOLUTE CARRIER FAMILY 34 SODIUM PHOSPHATE , MEMBER 2-RELATED"/>
    <property type="match status" value="1"/>
</dbReference>
<dbReference type="Pfam" id="PF02690">
    <property type="entry name" value="Na_Pi_cotrans"/>
    <property type="match status" value="2"/>
</dbReference>
<proteinExistence type="evidence at transcript level"/>
<protein>
    <recommendedName>
        <fullName>Sodium-dependent phosphate transport protein 2B</fullName>
        <shortName>Sodium-phosphate transport protein 2B</shortName>
    </recommendedName>
    <alternativeName>
        <fullName>Na(+)-dependent phosphate cotransporter 2B</fullName>
    </alternativeName>
    <alternativeName>
        <fullName>Sodium/phosphate cotransporter 2B</fullName>
        <shortName>Na(+)/Pi cotransporter 2B</shortName>
        <shortName>NaPi-2b</shortName>
    </alternativeName>
    <alternativeName>
        <fullName>Solute carrier family 34 member 2</fullName>
    </alternativeName>
</protein>
<reference key="1">
    <citation type="submission" date="2004-11" db="EMBL/GenBank/DDBJ databases">
        <authorList>
            <consortium name="The German cDNA consortium"/>
        </authorList>
    </citation>
    <scope>NUCLEOTIDE SEQUENCE [LARGE SCALE MRNA]</scope>
    <source>
        <tissue>Kidney</tissue>
    </source>
</reference>
<sequence length="689" mass="75521">MAPWPELGDAQPNPDKYLEGAAGQQPTAPDKSKETNKNNTEAPVTKIELLPTYSTATLIDEPTEVDDPWNIPTLQDSGIKWSERDTKGKILCVFQGIGRLILLLGFLYFFVCSLDILSSAFQLVGGKMAGQFFSNSSIMSNPLLGLVIGVLVTVLVQSSSTSTSIVVSMVSSSLLTVRAAIPIIMGANIGTSITNTIVALMQVGDRSEFRRAFAGATVHDFFNWLSVLVLLPVEVATHYLEIITQLIVDSFHSKNGEDAPDLLKVITKPFTKLIVQLDKKIISQIAMNDEKAKNKSLVKIWCKTFTNKTQVNVTVPSTANCTSPSLCWTDGIQTWTMKNVTYKENIAKCQHIFVNFHLPDLAVGTILLILSLLVLCGCLIMIVKILGSVLKGQVATVIKKTINTDFPFPFAWLTGYLAILVGAGMTFIVQSSSVFTSALTPLIGIGVITIERAYPLTLGSNIGTTTTAILAALASPGNALRSSLQIALCHFFFNISGILLWYPIPFTRLPIRMAKGLGNISAKYRWFAVFYLIIFFFLIPLTVFGLSLAGWRVLVGVGVPVVFIIILVLCLRLLQSRCPRVLPKKLQNWNFLPLWMRSLKPWDAVFSKFTGCFQMRCCCCCRVCCRACCLLCGCPKCCRCSKCCEDLEEAHEGQDVPVKAPDTFDNITISREAQGEVPASDSKTECTAL</sequence>
<keyword id="KW-1003">Cell membrane</keyword>
<keyword id="KW-1015">Disulfide bond</keyword>
<keyword id="KW-0325">Glycoprotein</keyword>
<keyword id="KW-0406">Ion transport</keyword>
<keyword id="KW-0472">Membrane</keyword>
<keyword id="KW-1185">Reference proteome</keyword>
<keyword id="KW-0915">Sodium</keyword>
<keyword id="KW-0739">Sodium transport</keyword>
<keyword id="KW-0769">Symport</keyword>
<keyword id="KW-0812">Transmembrane</keyword>
<keyword id="KW-1133">Transmembrane helix</keyword>
<keyword id="KW-0813">Transport</keyword>